<sequence length="189" mass="21020">MAKVNLEQIEHAVRLILEAIGDDPNREGVLDTPKRVAKMYAEVFSGMHEDPKEHLHKVFGEDHEELVLVKDIPFYSMCEHHLVPFYGVAHVAYIPQGGKVTGLSKLARTVDTIARRPQLQERITSTVANSIMEVLEPHGVMVVVEAEHMCMTMRGVKKPGAKTVTTAVRGVLENDAAARSEILSFIKTK</sequence>
<feature type="chain" id="PRO_1000190068" description="GTP cyclohydrolase 1">
    <location>
        <begin position="1"/>
        <end position="189"/>
    </location>
</feature>
<feature type="binding site" evidence="1">
    <location>
        <position position="78"/>
    </location>
    <ligand>
        <name>Zn(2+)</name>
        <dbReference type="ChEBI" id="CHEBI:29105"/>
    </ligand>
</feature>
<feature type="binding site" evidence="1">
    <location>
        <position position="81"/>
    </location>
    <ligand>
        <name>Zn(2+)</name>
        <dbReference type="ChEBI" id="CHEBI:29105"/>
    </ligand>
</feature>
<feature type="binding site" evidence="1">
    <location>
        <position position="150"/>
    </location>
    <ligand>
        <name>Zn(2+)</name>
        <dbReference type="ChEBI" id="CHEBI:29105"/>
    </ligand>
</feature>
<evidence type="ECO:0000255" key="1">
    <source>
        <dbReference type="HAMAP-Rule" id="MF_00223"/>
    </source>
</evidence>
<comment type="catalytic activity">
    <reaction evidence="1">
        <text>GTP + H2O = 7,8-dihydroneopterin 3'-triphosphate + formate + H(+)</text>
        <dbReference type="Rhea" id="RHEA:17473"/>
        <dbReference type="ChEBI" id="CHEBI:15377"/>
        <dbReference type="ChEBI" id="CHEBI:15378"/>
        <dbReference type="ChEBI" id="CHEBI:15740"/>
        <dbReference type="ChEBI" id="CHEBI:37565"/>
        <dbReference type="ChEBI" id="CHEBI:58462"/>
        <dbReference type="EC" id="3.5.4.16"/>
    </reaction>
</comment>
<comment type="pathway">
    <text evidence="1">Cofactor biosynthesis; 7,8-dihydroneopterin triphosphate biosynthesis; 7,8-dihydroneopterin triphosphate from GTP: step 1/1.</text>
</comment>
<comment type="subunit">
    <text evidence="1">Homomer.</text>
</comment>
<comment type="similarity">
    <text evidence="1">Belongs to the GTP cyclohydrolase I family.</text>
</comment>
<keyword id="KW-0378">Hydrolase</keyword>
<keyword id="KW-0479">Metal-binding</keyword>
<keyword id="KW-0554">One-carbon metabolism</keyword>
<keyword id="KW-0862">Zinc</keyword>
<accession>B7HL21</accession>
<proteinExistence type="inferred from homology"/>
<name>GCH1_BACC7</name>
<protein>
    <recommendedName>
        <fullName evidence="1">GTP cyclohydrolase 1</fullName>
        <ecNumber evidence="1">3.5.4.16</ecNumber>
    </recommendedName>
    <alternativeName>
        <fullName evidence="1">GTP cyclohydrolase I</fullName>
        <shortName evidence="1">GTP-CH-I</shortName>
    </alternativeName>
</protein>
<dbReference type="EC" id="3.5.4.16" evidence="1"/>
<dbReference type="EMBL" id="CP001177">
    <property type="protein sequence ID" value="ACJ81058.1"/>
    <property type="molecule type" value="Genomic_DNA"/>
</dbReference>
<dbReference type="SMR" id="B7HL21"/>
<dbReference type="KEGG" id="bcr:BCAH187_A1674"/>
<dbReference type="HOGENOM" id="CLU_049768_3_3_9"/>
<dbReference type="UniPathway" id="UPA00848">
    <property type="reaction ID" value="UER00151"/>
</dbReference>
<dbReference type="Proteomes" id="UP000002214">
    <property type="component" value="Chromosome"/>
</dbReference>
<dbReference type="GO" id="GO:0005737">
    <property type="term" value="C:cytoplasm"/>
    <property type="evidence" value="ECO:0007669"/>
    <property type="project" value="TreeGrafter"/>
</dbReference>
<dbReference type="GO" id="GO:0005525">
    <property type="term" value="F:GTP binding"/>
    <property type="evidence" value="ECO:0007669"/>
    <property type="project" value="TreeGrafter"/>
</dbReference>
<dbReference type="GO" id="GO:0003934">
    <property type="term" value="F:GTP cyclohydrolase I activity"/>
    <property type="evidence" value="ECO:0007669"/>
    <property type="project" value="UniProtKB-UniRule"/>
</dbReference>
<dbReference type="GO" id="GO:0008270">
    <property type="term" value="F:zinc ion binding"/>
    <property type="evidence" value="ECO:0007669"/>
    <property type="project" value="UniProtKB-UniRule"/>
</dbReference>
<dbReference type="GO" id="GO:0006730">
    <property type="term" value="P:one-carbon metabolic process"/>
    <property type="evidence" value="ECO:0007669"/>
    <property type="project" value="UniProtKB-UniRule"/>
</dbReference>
<dbReference type="GO" id="GO:0006729">
    <property type="term" value="P:tetrahydrobiopterin biosynthetic process"/>
    <property type="evidence" value="ECO:0007669"/>
    <property type="project" value="TreeGrafter"/>
</dbReference>
<dbReference type="GO" id="GO:0046654">
    <property type="term" value="P:tetrahydrofolate biosynthetic process"/>
    <property type="evidence" value="ECO:0007669"/>
    <property type="project" value="UniProtKB-UniRule"/>
</dbReference>
<dbReference type="CDD" id="cd00642">
    <property type="entry name" value="GTP_cyclohydro1"/>
    <property type="match status" value="1"/>
</dbReference>
<dbReference type="FunFam" id="1.10.286.10:FF:000001">
    <property type="entry name" value="GTP cyclohydrolase 1"/>
    <property type="match status" value="1"/>
</dbReference>
<dbReference type="FunFam" id="3.30.1130.10:FF:000001">
    <property type="entry name" value="GTP cyclohydrolase 1"/>
    <property type="match status" value="1"/>
</dbReference>
<dbReference type="Gene3D" id="1.10.286.10">
    <property type="match status" value="1"/>
</dbReference>
<dbReference type="Gene3D" id="3.30.1130.10">
    <property type="match status" value="1"/>
</dbReference>
<dbReference type="HAMAP" id="MF_00223">
    <property type="entry name" value="FolE"/>
    <property type="match status" value="1"/>
</dbReference>
<dbReference type="InterPro" id="IPR043133">
    <property type="entry name" value="GTP-CH-I_C/QueF"/>
</dbReference>
<dbReference type="InterPro" id="IPR043134">
    <property type="entry name" value="GTP-CH-I_N"/>
</dbReference>
<dbReference type="InterPro" id="IPR001474">
    <property type="entry name" value="GTP_CycHdrlase_I"/>
</dbReference>
<dbReference type="InterPro" id="IPR018234">
    <property type="entry name" value="GTP_CycHdrlase_I_CS"/>
</dbReference>
<dbReference type="InterPro" id="IPR020602">
    <property type="entry name" value="GTP_CycHdrlase_I_dom"/>
</dbReference>
<dbReference type="NCBIfam" id="TIGR00063">
    <property type="entry name" value="folE"/>
    <property type="match status" value="1"/>
</dbReference>
<dbReference type="NCBIfam" id="NF006825">
    <property type="entry name" value="PRK09347.1-2"/>
    <property type="match status" value="1"/>
</dbReference>
<dbReference type="NCBIfam" id="NF006826">
    <property type="entry name" value="PRK09347.1-3"/>
    <property type="match status" value="1"/>
</dbReference>
<dbReference type="PANTHER" id="PTHR11109:SF7">
    <property type="entry name" value="GTP CYCLOHYDROLASE 1"/>
    <property type="match status" value="1"/>
</dbReference>
<dbReference type="PANTHER" id="PTHR11109">
    <property type="entry name" value="GTP CYCLOHYDROLASE I"/>
    <property type="match status" value="1"/>
</dbReference>
<dbReference type="Pfam" id="PF01227">
    <property type="entry name" value="GTP_cyclohydroI"/>
    <property type="match status" value="1"/>
</dbReference>
<dbReference type="SUPFAM" id="SSF55620">
    <property type="entry name" value="Tetrahydrobiopterin biosynthesis enzymes-like"/>
    <property type="match status" value="1"/>
</dbReference>
<dbReference type="PROSITE" id="PS00859">
    <property type="entry name" value="GTP_CYCLOHYDROL_1_1"/>
    <property type="match status" value="1"/>
</dbReference>
<dbReference type="PROSITE" id="PS00860">
    <property type="entry name" value="GTP_CYCLOHYDROL_1_2"/>
    <property type="match status" value="1"/>
</dbReference>
<reference key="1">
    <citation type="submission" date="2008-10" db="EMBL/GenBank/DDBJ databases">
        <title>Genome sequence of Bacillus cereus AH187.</title>
        <authorList>
            <person name="Dodson R.J."/>
            <person name="Durkin A.S."/>
            <person name="Rosovitz M.J."/>
            <person name="Rasko D.A."/>
            <person name="Kolsto A.B."/>
            <person name="Okstad O.A."/>
            <person name="Ravel J."/>
            <person name="Sutton G."/>
        </authorList>
    </citation>
    <scope>NUCLEOTIDE SEQUENCE [LARGE SCALE GENOMIC DNA]</scope>
    <source>
        <strain>AH187</strain>
    </source>
</reference>
<organism>
    <name type="scientific">Bacillus cereus (strain AH187)</name>
    <dbReference type="NCBI Taxonomy" id="405534"/>
    <lineage>
        <taxon>Bacteria</taxon>
        <taxon>Bacillati</taxon>
        <taxon>Bacillota</taxon>
        <taxon>Bacilli</taxon>
        <taxon>Bacillales</taxon>
        <taxon>Bacillaceae</taxon>
        <taxon>Bacillus</taxon>
        <taxon>Bacillus cereus group</taxon>
    </lineage>
</organism>
<gene>
    <name evidence="1" type="primary">folE</name>
    <name type="ordered locus">BCAH187_A1674</name>
</gene>